<feature type="chain" id="PRO_1000062022" description="5-oxoprolinase subunit A">
    <location>
        <begin position="1"/>
        <end position="244"/>
    </location>
</feature>
<comment type="function">
    <text evidence="1">Catalyzes the cleavage of 5-oxoproline to form L-glutamate coupled to the hydrolysis of ATP to ADP and inorganic phosphate.</text>
</comment>
<comment type="catalytic activity">
    <reaction evidence="1">
        <text>5-oxo-L-proline + ATP + 2 H2O = L-glutamate + ADP + phosphate + H(+)</text>
        <dbReference type="Rhea" id="RHEA:10348"/>
        <dbReference type="ChEBI" id="CHEBI:15377"/>
        <dbReference type="ChEBI" id="CHEBI:15378"/>
        <dbReference type="ChEBI" id="CHEBI:29985"/>
        <dbReference type="ChEBI" id="CHEBI:30616"/>
        <dbReference type="ChEBI" id="CHEBI:43474"/>
        <dbReference type="ChEBI" id="CHEBI:58402"/>
        <dbReference type="ChEBI" id="CHEBI:456216"/>
        <dbReference type="EC" id="3.5.2.9"/>
    </reaction>
</comment>
<comment type="subunit">
    <text evidence="1">Forms a complex composed of PxpA, PxpB and PxpC.</text>
</comment>
<comment type="similarity">
    <text evidence="1">Belongs to the LamB/PxpA family.</text>
</comment>
<sequence>MKIDLNADLGEGCASDAELLTLVSSANIACGFHAGDAQTMQACVREAIKNGVAIGAHPSFPDRENFGRSAMQLPPETVYAQTLYQIGALATIARAQGGVMRHVKPHGMLYNQAAKEAQLADAIARAVYACDPALVLVGLAGSELIRAGKQYGLTTREEVFADRGYQADGSLVPRSQPGALIENEEQALAQTLEMVQHGRVKSITGEWATVTAQTVCLHGDGEHALAFARRLRSTFAEKEIVVAA</sequence>
<reference key="1">
    <citation type="journal article" date="2008" name="J. Bacteriol.">
        <title>The pangenome structure of Escherichia coli: comparative genomic analysis of E. coli commensal and pathogenic isolates.</title>
        <authorList>
            <person name="Rasko D.A."/>
            <person name="Rosovitz M.J."/>
            <person name="Myers G.S.A."/>
            <person name="Mongodin E.F."/>
            <person name="Fricke W.F."/>
            <person name="Gajer P."/>
            <person name="Crabtree J."/>
            <person name="Sebaihia M."/>
            <person name="Thomson N.R."/>
            <person name="Chaudhuri R."/>
            <person name="Henderson I.R."/>
            <person name="Sperandio V."/>
            <person name="Ravel J."/>
        </authorList>
    </citation>
    <scope>NUCLEOTIDE SEQUENCE [LARGE SCALE GENOMIC DNA]</scope>
    <source>
        <strain>HS</strain>
    </source>
</reference>
<accession>A7ZXX4</accession>
<dbReference type="EC" id="3.5.2.9" evidence="1"/>
<dbReference type="EMBL" id="CP000802">
    <property type="protein sequence ID" value="ABV05128.1"/>
    <property type="molecule type" value="Genomic_DNA"/>
</dbReference>
<dbReference type="RefSeq" id="WP_000687142.1">
    <property type="nucleotide sequence ID" value="NC_009800.1"/>
</dbReference>
<dbReference type="SMR" id="A7ZXX4"/>
<dbReference type="GeneID" id="75205545"/>
<dbReference type="KEGG" id="ecx:EcHS_A0761"/>
<dbReference type="HOGENOM" id="CLU_069535_0_0_6"/>
<dbReference type="GO" id="GO:0017168">
    <property type="term" value="F:5-oxoprolinase (ATP-hydrolyzing) activity"/>
    <property type="evidence" value="ECO:0007669"/>
    <property type="project" value="UniProtKB-UniRule"/>
</dbReference>
<dbReference type="GO" id="GO:0005524">
    <property type="term" value="F:ATP binding"/>
    <property type="evidence" value="ECO:0007669"/>
    <property type="project" value="UniProtKB-UniRule"/>
</dbReference>
<dbReference type="GO" id="GO:0005975">
    <property type="term" value="P:carbohydrate metabolic process"/>
    <property type="evidence" value="ECO:0007669"/>
    <property type="project" value="InterPro"/>
</dbReference>
<dbReference type="CDD" id="cd10800">
    <property type="entry name" value="LamB_YcsF_YbgL_like"/>
    <property type="match status" value="1"/>
</dbReference>
<dbReference type="Gene3D" id="3.20.20.370">
    <property type="entry name" value="Glycoside hydrolase/deacetylase"/>
    <property type="match status" value="1"/>
</dbReference>
<dbReference type="HAMAP" id="MF_00691">
    <property type="entry name" value="PxpA"/>
    <property type="match status" value="1"/>
</dbReference>
<dbReference type="InterPro" id="IPR011330">
    <property type="entry name" value="Glyco_hydro/deAcase_b/a-brl"/>
</dbReference>
<dbReference type="InterPro" id="IPR005501">
    <property type="entry name" value="LamB/YcsF/PxpA-like"/>
</dbReference>
<dbReference type="NCBIfam" id="NF003812">
    <property type="entry name" value="PRK05406.1-1"/>
    <property type="match status" value="1"/>
</dbReference>
<dbReference type="NCBIfam" id="NF003814">
    <property type="entry name" value="PRK05406.1-3"/>
    <property type="match status" value="1"/>
</dbReference>
<dbReference type="NCBIfam" id="NF003815">
    <property type="entry name" value="PRK05406.1-4"/>
    <property type="match status" value="1"/>
</dbReference>
<dbReference type="NCBIfam" id="NF003816">
    <property type="entry name" value="PRK05406.1-5"/>
    <property type="match status" value="1"/>
</dbReference>
<dbReference type="PANTHER" id="PTHR30292:SF0">
    <property type="entry name" value="5-OXOPROLINASE SUBUNIT A"/>
    <property type="match status" value="1"/>
</dbReference>
<dbReference type="PANTHER" id="PTHR30292">
    <property type="entry name" value="UNCHARACTERIZED PROTEIN YBGL-RELATED"/>
    <property type="match status" value="1"/>
</dbReference>
<dbReference type="Pfam" id="PF03746">
    <property type="entry name" value="LamB_YcsF"/>
    <property type="match status" value="1"/>
</dbReference>
<dbReference type="SUPFAM" id="SSF88713">
    <property type="entry name" value="Glycoside hydrolase/deacetylase"/>
    <property type="match status" value="1"/>
</dbReference>
<gene>
    <name evidence="1" type="primary">pxpA</name>
    <name type="ordered locus">EcHS_A0761</name>
</gene>
<organism>
    <name type="scientific">Escherichia coli O9:H4 (strain HS)</name>
    <dbReference type="NCBI Taxonomy" id="331112"/>
    <lineage>
        <taxon>Bacteria</taxon>
        <taxon>Pseudomonadati</taxon>
        <taxon>Pseudomonadota</taxon>
        <taxon>Gammaproteobacteria</taxon>
        <taxon>Enterobacterales</taxon>
        <taxon>Enterobacteriaceae</taxon>
        <taxon>Escherichia</taxon>
    </lineage>
</organism>
<evidence type="ECO:0000255" key="1">
    <source>
        <dbReference type="HAMAP-Rule" id="MF_00691"/>
    </source>
</evidence>
<keyword id="KW-0067">ATP-binding</keyword>
<keyword id="KW-0378">Hydrolase</keyword>
<keyword id="KW-0547">Nucleotide-binding</keyword>
<proteinExistence type="inferred from homology"/>
<name>PXPA_ECOHS</name>
<protein>
    <recommendedName>
        <fullName evidence="1">5-oxoprolinase subunit A</fullName>
        <shortName evidence="1">5-OPase subunit A</shortName>
        <ecNumber evidence="1">3.5.2.9</ecNumber>
    </recommendedName>
    <alternativeName>
        <fullName evidence="1">5-oxoprolinase (ATP-hydrolyzing) subunit A</fullName>
    </alternativeName>
</protein>